<name>LRKS7_ARATH</name>
<gene>
    <name evidence="5" type="primary">LECRKS7</name>
    <name evidence="7" type="ordered locus">At5g55830</name>
    <name evidence="8" type="ORF">MDF20.27</name>
</gene>
<proteinExistence type="evidence at transcript level"/>
<protein>
    <recommendedName>
        <fullName evidence="5">Probable L-type lectin-domain containing receptor kinase S.7</fullName>
        <shortName evidence="5">LecRK-S.7</shortName>
        <ecNumber evidence="3">2.7.11.1</ecNumber>
    </recommendedName>
</protein>
<organism>
    <name type="scientific">Arabidopsis thaliana</name>
    <name type="common">Mouse-ear cress</name>
    <dbReference type="NCBI Taxonomy" id="3702"/>
    <lineage>
        <taxon>Eukaryota</taxon>
        <taxon>Viridiplantae</taxon>
        <taxon>Streptophyta</taxon>
        <taxon>Embryophyta</taxon>
        <taxon>Tracheophyta</taxon>
        <taxon>Spermatophyta</taxon>
        <taxon>Magnoliopsida</taxon>
        <taxon>eudicotyledons</taxon>
        <taxon>Gunneridae</taxon>
        <taxon>Pentapetalae</taxon>
        <taxon>rosids</taxon>
        <taxon>malvids</taxon>
        <taxon>Brassicales</taxon>
        <taxon>Brassicaceae</taxon>
        <taxon>Camelineae</taxon>
        <taxon>Arabidopsis</taxon>
    </lineage>
</organism>
<accession>Q9FHG4</accession>
<reference key="1">
    <citation type="journal article" date="2000" name="DNA Res.">
        <title>Structural analysis of Arabidopsis thaliana chromosome 5. X. Sequence features of the regions of 3,076,755 bp covered by sixty P1 and TAC clones.</title>
        <authorList>
            <person name="Sato S."/>
            <person name="Nakamura Y."/>
            <person name="Kaneko T."/>
            <person name="Katoh T."/>
            <person name="Asamizu E."/>
            <person name="Kotani H."/>
            <person name="Tabata S."/>
        </authorList>
    </citation>
    <scope>NUCLEOTIDE SEQUENCE [LARGE SCALE GENOMIC DNA]</scope>
    <source>
        <strain>cv. Columbia</strain>
    </source>
</reference>
<reference key="2">
    <citation type="journal article" date="1998" name="DNA Res.">
        <title>Structural analysis of Arabidopsis thaliana chromosome 5. IV. Sequence features of the regions of 1,456,315 bp covered by nineteen physically assigned P1 and TAC clones.</title>
        <authorList>
            <person name="Sato S."/>
            <person name="Kaneko T."/>
            <person name="Kotani H."/>
            <person name="Nakamura Y."/>
            <person name="Asamizu E."/>
            <person name="Miyajima N."/>
            <person name="Tabata S."/>
        </authorList>
    </citation>
    <scope>NUCLEOTIDE SEQUENCE [LARGE SCALE GENOMIC DNA]</scope>
    <source>
        <strain>cv. Columbia</strain>
    </source>
</reference>
<reference key="3">
    <citation type="journal article" date="2017" name="Plant J.">
        <title>Araport11: a complete reannotation of the Arabidopsis thaliana reference genome.</title>
        <authorList>
            <person name="Cheng C.Y."/>
            <person name="Krishnakumar V."/>
            <person name="Chan A.P."/>
            <person name="Thibaud-Nissen F."/>
            <person name="Schobel S."/>
            <person name="Town C.D."/>
        </authorList>
    </citation>
    <scope>GENOME REANNOTATION</scope>
    <source>
        <strain>cv. Columbia</strain>
    </source>
</reference>
<reference key="4">
    <citation type="journal article" date="2002" name="Crit. Rev. Plant Sci.">
        <title>Lectin receptor kinases in plants.</title>
        <authorList>
            <person name="Barre A."/>
            <person name="Herve C."/>
            <person name="Lescure B."/>
            <person name="Rouge P."/>
        </authorList>
    </citation>
    <scope>GENE FAMILY</scope>
</reference>
<reference key="5">
    <citation type="journal article" date="2009" name="J. Exp. Bot.">
        <title>Arabidopsis L-type lectin receptor kinases: phylogeny, classification, and expression profiles.</title>
        <authorList>
            <person name="Bouwmeester K."/>
            <person name="Govers F."/>
        </authorList>
    </citation>
    <scope>GENE FAMILY</scope>
    <scope>NOMENCLATURE</scope>
</reference>
<reference key="6">
    <citation type="journal article" date="2014" name="Mol. Plant Microbe Interact.">
        <title>Phenotypic analyses of Arabidopsis T-DNA insertion lines and expression profiling reveal that multiple L-type lectin receptor kinases are involved in plant immunity.</title>
        <authorList>
            <person name="Wang Y."/>
            <person name="Bouwmeester K."/>
            <person name="Beseh P."/>
            <person name="Shan W."/>
            <person name="Govers F."/>
        </authorList>
    </citation>
    <scope>FUNCTION</scope>
    <scope>DISRUPTION PHENOTYPE</scope>
    <source>
        <strain>cv. Columbia</strain>
    </source>
</reference>
<keyword id="KW-0067">ATP-binding</keyword>
<keyword id="KW-1003">Cell membrane</keyword>
<keyword id="KW-0325">Glycoprotein</keyword>
<keyword id="KW-0418">Kinase</keyword>
<keyword id="KW-0430">Lectin</keyword>
<keyword id="KW-0472">Membrane</keyword>
<keyword id="KW-0547">Nucleotide-binding</keyword>
<keyword id="KW-0611">Plant defense</keyword>
<keyword id="KW-0675">Receptor</keyword>
<keyword id="KW-1185">Reference proteome</keyword>
<keyword id="KW-0723">Serine/threonine-protein kinase</keyword>
<keyword id="KW-0732">Signal</keyword>
<keyword id="KW-0808">Transferase</keyword>
<keyword id="KW-0812">Transmembrane</keyword>
<keyword id="KW-1133">Transmembrane helix</keyword>
<sequence>MSLSRKLLVIFFTWITALSMSKPIFVSSDNMNFTFKSFTIRNLTFLGDSHLRNGVVGLTRELGVPDTSSGTVIYNNPIRFYDPDSNTTASFSTHFSFTVQNLNPDPTSAGDGLAFFLSHDNDTLGSPGGYLGLVNSSQPMKNRFVAIEFDTKLDPHFNDPNGNHIGLDVDSLNSISTSDPLLSSQIDLKSGKSITSWIDYKNDLRLLNVFLSYTDPVTTTKKPEKPLLSVNIDLSPFLNGEMYVGFSGSTEGSTEIHLIENWSFKTSGFLPVRSKSNHLHNVSDSSVVNDDPVVIPSKKRRHRHNLAIGLGISCPVLICLALFVFGYFTLKKWKSVKAEKELKTELITGLREFSYKELYTATKGFHSSRVIGRGAFGNVYRAMFVSSGTISAVKRSRHNSTEGKTEFLAELSIIACLRHKNLVQLQGWCNEKGELLLVYEFMPNGSLDKILYQESQTGAVALDWSHRLNIAIGLASALSYLHHECEQQVVHRDIKTSNIMLDINFNARLGDFGLARLTEHDKSPVSTLTAGTMGYLAPEYLQYGTATEKTDAFSYGVVILEVACGRRPIDKEPESQKTVNLVDWVWRLHSEGRVLEAVDERLKGEFDEEMMKKLLLVGLKCAHPDSNERPSMRRVLQILNNEIEPSPVPKMKPTLSFSCGLSLDDIVSEDEEGDSIVYVVS</sequence>
<evidence type="ECO:0000250" key="1">
    <source>
        <dbReference type="UniProtKB" id="Q9LSR8"/>
    </source>
</evidence>
<evidence type="ECO:0000255" key="2"/>
<evidence type="ECO:0000255" key="3">
    <source>
        <dbReference type="PROSITE-ProRule" id="PRU00159"/>
    </source>
</evidence>
<evidence type="ECO:0000269" key="4">
    <source>
    </source>
</evidence>
<evidence type="ECO:0000303" key="5">
    <source>
    </source>
</evidence>
<evidence type="ECO:0000305" key="6"/>
<evidence type="ECO:0000312" key="7">
    <source>
        <dbReference type="Araport" id="AT5G55830"/>
    </source>
</evidence>
<evidence type="ECO:0000312" key="8">
    <source>
        <dbReference type="EMBL" id="BAB10136.1"/>
    </source>
</evidence>
<feature type="signal peptide" evidence="2">
    <location>
        <begin position="1"/>
        <end position="21"/>
    </location>
</feature>
<feature type="chain" id="PRO_0000403109" description="Probable L-type lectin-domain containing receptor kinase S.7">
    <location>
        <begin position="22"/>
        <end position="681"/>
    </location>
</feature>
<feature type="topological domain" description="Extracellular" evidence="2">
    <location>
        <begin position="22"/>
        <end position="305"/>
    </location>
</feature>
<feature type="transmembrane region" description="Helical" evidence="2">
    <location>
        <begin position="306"/>
        <end position="326"/>
    </location>
</feature>
<feature type="topological domain" description="Cytoplasmic" evidence="2">
    <location>
        <begin position="327"/>
        <end position="681"/>
    </location>
</feature>
<feature type="domain" description="Protein kinase" evidence="3">
    <location>
        <begin position="365"/>
        <end position="643"/>
    </location>
</feature>
<feature type="region of interest" description="Legume-lectin like" evidence="2">
    <location>
        <begin position="30"/>
        <end position="265"/>
    </location>
</feature>
<feature type="active site" description="Proton acceptor" evidence="3">
    <location>
        <position position="493"/>
    </location>
</feature>
<feature type="binding site" evidence="3">
    <location>
        <begin position="371"/>
        <end position="379"/>
    </location>
    <ligand>
        <name>ATP</name>
        <dbReference type="ChEBI" id="CHEBI:30616"/>
    </ligand>
</feature>
<feature type="binding site" evidence="3">
    <location>
        <position position="394"/>
    </location>
    <ligand>
        <name>ATP</name>
        <dbReference type="ChEBI" id="CHEBI:30616"/>
    </ligand>
</feature>
<feature type="glycosylation site" description="N-linked (GlcNAc...) asparagine" evidence="2">
    <location>
        <position position="32"/>
    </location>
</feature>
<feature type="glycosylation site" description="N-linked (GlcNAc...) asparagine" evidence="2">
    <location>
        <position position="42"/>
    </location>
</feature>
<feature type="glycosylation site" description="N-linked (GlcNAc...) asparagine" evidence="2">
    <location>
        <position position="86"/>
    </location>
</feature>
<feature type="glycosylation site" description="N-linked (GlcNAc...) asparagine" evidence="2">
    <location>
        <position position="121"/>
    </location>
</feature>
<feature type="glycosylation site" description="N-linked (GlcNAc...) asparagine" evidence="2">
    <location>
        <position position="135"/>
    </location>
</feature>
<feature type="glycosylation site" description="N-linked (GlcNAc...) asparagine" evidence="2">
    <location>
        <position position="261"/>
    </location>
</feature>
<feature type="glycosylation site" description="N-linked (GlcNAc...) asparagine" evidence="2">
    <location>
        <position position="281"/>
    </location>
</feature>
<comment type="function">
    <text evidence="4">Involved in resistance response to the pathogenic oomycetes Phytophthora infestans and Phytophthora capsici.</text>
</comment>
<comment type="catalytic activity">
    <reaction evidence="3">
        <text>L-seryl-[protein] + ATP = O-phospho-L-seryl-[protein] + ADP + H(+)</text>
        <dbReference type="Rhea" id="RHEA:17989"/>
        <dbReference type="Rhea" id="RHEA-COMP:9863"/>
        <dbReference type="Rhea" id="RHEA-COMP:11604"/>
        <dbReference type="ChEBI" id="CHEBI:15378"/>
        <dbReference type="ChEBI" id="CHEBI:29999"/>
        <dbReference type="ChEBI" id="CHEBI:30616"/>
        <dbReference type="ChEBI" id="CHEBI:83421"/>
        <dbReference type="ChEBI" id="CHEBI:456216"/>
        <dbReference type="EC" id="2.7.11.1"/>
    </reaction>
</comment>
<comment type="catalytic activity">
    <reaction evidence="3">
        <text>L-threonyl-[protein] + ATP = O-phospho-L-threonyl-[protein] + ADP + H(+)</text>
        <dbReference type="Rhea" id="RHEA:46608"/>
        <dbReference type="Rhea" id="RHEA-COMP:11060"/>
        <dbReference type="Rhea" id="RHEA-COMP:11605"/>
        <dbReference type="ChEBI" id="CHEBI:15378"/>
        <dbReference type="ChEBI" id="CHEBI:30013"/>
        <dbReference type="ChEBI" id="CHEBI:30616"/>
        <dbReference type="ChEBI" id="CHEBI:61977"/>
        <dbReference type="ChEBI" id="CHEBI:456216"/>
        <dbReference type="EC" id="2.7.11.1"/>
    </reaction>
</comment>
<comment type="subcellular location">
    <subcellularLocation>
        <location evidence="1">Cell membrane</location>
        <topology evidence="2">Single-pass type I membrane protein</topology>
    </subcellularLocation>
</comment>
<comment type="disruption phenotype">
    <text evidence="4">Increased susceptibility to the oomycetes Phytophthora brassicae and Phytophthora capsici.</text>
</comment>
<comment type="similarity">
    <text evidence="6">In the C-terminal section; belongs to the protein kinase superfamily. Ser/Thr protein kinase family.</text>
</comment>
<comment type="similarity">
    <text evidence="6">In the N-terminal section; belongs to the leguminous lectin family.</text>
</comment>
<dbReference type="EC" id="2.7.11.1" evidence="3"/>
<dbReference type="EMBL" id="AB018120">
    <property type="protein sequence ID" value="BAB10136.1"/>
    <property type="molecule type" value="Genomic_DNA"/>
</dbReference>
<dbReference type="EMBL" id="AB009050">
    <property type="protein sequence ID" value="BAB10136.1"/>
    <property type="status" value="JOINED"/>
    <property type="molecule type" value="Genomic_DNA"/>
</dbReference>
<dbReference type="EMBL" id="CP002688">
    <property type="protein sequence ID" value="AED96685.1"/>
    <property type="molecule type" value="Genomic_DNA"/>
</dbReference>
<dbReference type="RefSeq" id="NP_200394.1">
    <property type="nucleotide sequence ID" value="NM_124965.2"/>
</dbReference>
<dbReference type="SMR" id="Q9FHG4"/>
<dbReference type="FunCoup" id="Q9FHG4">
    <property type="interactions" value="211"/>
</dbReference>
<dbReference type="STRING" id="3702.Q9FHG4"/>
<dbReference type="GlyCosmos" id="Q9FHG4">
    <property type="glycosylation" value="7 sites, No reported glycans"/>
</dbReference>
<dbReference type="GlyGen" id="Q9FHG4">
    <property type="glycosylation" value="7 sites"/>
</dbReference>
<dbReference type="iPTMnet" id="Q9FHG4"/>
<dbReference type="PaxDb" id="3702-AT5G55830.1"/>
<dbReference type="ProteomicsDB" id="238571"/>
<dbReference type="EnsemblPlants" id="AT5G55830.1">
    <property type="protein sequence ID" value="AT5G55830.1"/>
    <property type="gene ID" value="AT5G55830"/>
</dbReference>
<dbReference type="GeneID" id="835677"/>
<dbReference type="Gramene" id="AT5G55830.1">
    <property type="protein sequence ID" value="AT5G55830.1"/>
    <property type="gene ID" value="AT5G55830"/>
</dbReference>
<dbReference type="KEGG" id="ath:AT5G55830"/>
<dbReference type="Araport" id="AT5G55830"/>
<dbReference type="TAIR" id="AT5G55830">
    <property type="gene designation" value="LECRK-S.7"/>
</dbReference>
<dbReference type="eggNOG" id="ENOG502QT3J">
    <property type="taxonomic scope" value="Eukaryota"/>
</dbReference>
<dbReference type="HOGENOM" id="CLU_000288_62_6_1"/>
<dbReference type="InParanoid" id="Q9FHG4"/>
<dbReference type="OMA" id="VALDWSH"/>
<dbReference type="PhylomeDB" id="Q9FHG4"/>
<dbReference type="PRO" id="PR:Q9FHG4"/>
<dbReference type="Proteomes" id="UP000006548">
    <property type="component" value="Chromosome 5"/>
</dbReference>
<dbReference type="ExpressionAtlas" id="Q9FHG4">
    <property type="expression patterns" value="baseline and differential"/>
</dbReference>
<dbReference type="GO" id="GO:0005886">
    <property type="term" value="C:plasma membrane"/>
    <property type="evidence" value="ECO:0000250"/>
    <property type="project" value="UniProtKB"/>
</dbReference>
<dbReference type="GO" id="GO:0005524">
    <property type="term" value="F:ATP binding"/>
    <property type="evidence" value="ECO:0007669"/>
    <property type="project" value="UniProtKB-KW"/>
</dbReference>
<dbReference type="GO" id="GO:0030246">
    <property type="term" value="F:carbohydrate binding"/>
    <property type="evidence" value="ECO:0007669"/>
    <property type="project" value="UniProtKB-KW"/>
</dbReference>
<dbReference type="GO" id="GO:0106310">
    <property type="term" value="F:protein serine kinase activity"/>
    <property type="evidence" value="ECO:0007669"/>
    <property type="project" value="RHEA"/>
</dbReference>
<dbReference type="GO" id="GO:0004674">
    <property type="term" value="F:protein serine/threonine kinase activity"/>
    <property type="evidence" value="ECO:0007669"/>
    <property type="project" value="UniProtKB-KW"/>
</dbReference>
<dbReference type="GO" id="GO:0002229">
    <property type="term" value="P:defense response to oomycetes"/>
    <property type="evidence" value="ECO:0000315"/>
    <property type="project" value="UniProtKB"/>
</dbReference>
<dbReference type="CDD" id="cd06899">
    <property type="entry name" value="lectin_legume_LecRK_Arcelin_ConA"/>
    <property type="match status" value="1"/>
</dbReference>
<dbReference type="CDD" id="cd14066">
    <property type="entry name" value="STKc_IRAK"/>
    <property type="match status" value="1"/>
</dbReference>
<dbReference type="FunFam" id="1.10.510.10:FF:000342">
    <property type="entry name" value="L-type lectin-domain containing receptor kinase VIII.1"/>
    <property type="match status" value="1"/>
</dbReference>
<dbReference type="FunFam" id="2.60.120.200:FF:000141">
    <property type="entry name" value="L-type lectin-domain containing receptor kinase VIII.1"/>
    <property type="match status" value="1"/>
</dbReference>
<dbReference type="FunFam" id="3.30.200.20:FF:000372">
    <property type="entry name" value="L-type lectin-domain containing receptor kinase VIII.1"/>
    <property type="match status" value="1"/>
</dbReference>
<dbReference type="Gene3D" id="2.60.120.200">
    <property type="match status" value="1"/>
</dbReference>
<dbReference type="Gene3D" id="3.30.200.20">
    <property type="entry name" value="Phosphorylase Kinase, domain 1"/>
    <property type="match status" value="1"/>
</dbReference>
<dbReference type="Gene3D" id="1.10.510.10">
    <property type="entry name" value="Transferase(Phosphotransferase) domain 1"/>
    <property type="match status" value="1"/>
</dbReference>
<dbReference type="InterPro" id="IPR013320">
    <property type="entry name" value="ConA-like_dom_sf"/>
</dbReference>
<dbReference type="InterPro" id="IPR011009">
    <property type="entry name" value="Kinase-like_dom_sf"/>
</dbReference>
<dbReference type="InterPro" id="IPR050528">
    <property type="entry name" value="L-type_Lectin-RKs"/>
</dbReference>
<dbReference type="InterPro" id="IPR001220">
    <property type="entry name" value="Legume_lectin_dom"/>
</dbReference>
<dbReference type="InterPro" id="IPR000719">
    <property type="entry name" value="Prot_kinase_dom"/>
</dbReference>
<dbReference type="InterPro" id="IPR017441">
    <property type="entry name" value="Protein_kinase_ATP_BS"/>
</dbReference>
<dbReference type="InterPro" id="IPR008271">
    <property type="entry name" value="Ser/Thr_kinase_AS"/>
</dbReference>
<dbReference type="PANTHER" id="PTHR27007">
    <property type="match status" value="1"/>
</dbReference>
<dbReference type="Pfam" id="PF00139">
    <property type="entry name" value="Lectin_legB"/>
    <property type="match status" value="1"/>
</dbReference>
<dbReference type="Pfam" id="PF00069">
    <property type="entry name" value="Pkinase"/>
    <property type="match status" value="1"/>
</dbReference>
<dbReference type="SMART" id="SM00220">
    <property type="entry name" value="S_TKc"/>
    <property type="match status" value="1"/>
</dbReference>
<dbReference type="SUPFAM" id="SSF49899">
    <property type="entry name" value="Concanavalin A-like lectins/glucanases"/>
    <property type="match status" value="1"/>
</dbReference>
<dbReference type="SUPFAM" id="SSF56112">
    <property type="entry name" value="Protein kinase-like (PK-like)"/>
    <property type="match status" value="1"/>
</dbReference>
<dbReference type="PROSITE" id="PS00107">
    <property type="entry name" value="PROTEIN_KINASE_ATP"/>
    <property type="match status" value="1"/>
</dbReference>
<dbReference type="PROSITE" id="PS50011">
    <property type="entry name" value="PROTEIN_KINASE_DOM"/>
    <property type="match status" value="1"/>
</dbReference>
<dbReference type="PROSITE" id="PS00108">
    <property type="entry name" value="PROTEIN_KINASE_ST"/>
    <property type="match status" value="1"/>
</dbReference>